<sequence length="427" mass="45683">MSAIVDIIGREILDSRGNPTVECDVLLESGTMGRAAVPSGASTGSREAIELRDGEAGRYGGKGVLKAVEHINTEISEAIMGLDASEQAFLDKTLLELDGTDNKSRLGANAMLAVSMAVAKAAAEEAGLPLYRYFGGSGAMQLPVPMMNIVNGGAHANNSLDIQEFMIVPVSQPTFREALRCGAEVFHALKKILGDRGMSTAVGDEGGFAPNFGSNDECLSTILQAIEKAGYRAGEDVLLALDCAASEFYHDGKYQLAGEGLQLSSAEFTDYLATLADKFPIVSIEDGMHEGDWDGWKLLTERLGKKVQLVGDDLFVTNTRILKEGIEKGIANSILIKINQIGTLTETFAAIEMAKRARYTAVISHRSGETEDSTIADIAVGLNAGQIKTGSLSRSDRISKYNQLLRIEEDLGDIASYPGKSAFYNLR</sequence>
<keyword id="KW-0963">Cytoplasm</keyword>
<keyword id="KW-0324">Glycolysis</keyword>
<keyword id="KW-0456">Lyase</keyword>
<keyword id="KW-0460">Magnesium</keyword>
<keyword id="KW-0479">Metal-binding</keyword>
<keyword id="KW-0964">Secreted</keyword>
<gene>
    <name evidence="1" type="primary">eno</name>
    <name type="ordered locus">BURPS668_2577</name>
</gene>
<accession>A3NB82</accession>
<proteinExistence type="inferred from homology"/>
<comment type="function">
    <text evidence="1">Catalyzes the reversible conversion of 2-phosphoglycerate (2-PG) into phosphoenolpyruvate (PEP). It is essential for the degradation of carbohydrates via glycolysis.</text>
</comment>
<comment type="catalytic activity">
    <reaction evidence="1">
        <text>(2R)-2-phosphoglycerate = phosphoenolpyruvate + H2O</text>
        <dbReference type="Rhea" id="RHEA:10164"/>
        <dbReference type="ChEBI" id="CHEBI:15377"/>
        <dbReference type="ChEBI" id="CHEBI:58289"/>
        <dbReference type="ChEBI" id="CHEBI:58702"/>
        <dbReference type="EC" id="4.2.1.11"/>
    </reaction>
</comment>
<comment type="cofactor">
    <cofactor evidence="1">
        <name>Mg(2+)</name>
        <dbReference type="ChEBI" id="CHEBI:18420"/>
    </cofactor>
    <text evidence="1">Binds a second Mg(2+) ion via substrate during catalysis.</text>
</comment>
<comment type="pathway">
    <text evidence="1">Carbohydrate degradation; glycolysis; pyruvate from D-glyceraldehyde 3-phosphate: step 4/5.</text>
</comment>
<comment type="subcellular location">
    <subcellularLocation>
        <location evidence="1">Cytoplasm</location>
    </subcellularLocation>
    <subcellularLocation>
        <location evidence="1">Secreted</location>
    </subcellularLocation>
    <subcellularLocation>
        <location evidence="1">Cell surface</location>
    </subcellularLocation>
    <text evidence="1">Fractions of enolase are present in both the cytoplasm and on the cell surface.</text>
</comment>
<comment type="similarity">
    <text evidence="1">Belongs to the enolase family.</text>
</comment>
<organism>
    <name type="scientific">Burkholderia pseudomallei (strain 668)</name>
    <dbReference type="NCBI Taxonomy" id="320373"/>
    <lineage>
        <taxon>Bacteria</taxon>
        <taxon>Pseudomonadati</taxon>
        <taxon>Pseudomonadota</taxon>
        <taxon>Betaproteobacteria</taxon>
        <taxon>Burkholderiales</taxon>
        <taxon>Burkholderiaceae</taxon>
        <taxon>Burkholderia</taxon>
        <taxon>pseudomallei group</taxon>
    </lineage>
</organism>
<feature type="chain" id="PRO_1000019195" description="Enolase">
    <location>
        <begin position="1"/>
        <end position="427"/>
    </location>
</feature>
<feature type="active site" description="Proton donor" evidence="1">
    <location>
        <position position="205"/>
    </location>
</feature>
<feature type="active site" description="Proton acceptor" evidence="1">
    <location>
        <position position="337"/>
    </location>
</feature>
<feature type="binding site" evidence="1">
    <location>
        <position position="163"/>
    </location>
    <ligand>
        <name>(2R)-2-phosphoglycerate</name>
        <dbReference type="ChEBI" id="CHEBI:58289"/>
    </ligand>
</feature>
<feature type="binding site" evidence="1">
    <location>
        <position position="242"/>
    </location>
    <ligand>
        <name>Mg(2+)</name>
        <dbReference type="ChEBI" id="CHEBI:18420"/>
    </ligand>
</feature>
<feature type="binding site" evidence="1">
    <location>
        <position position="285"/>
    </location>
    <ligand>
        <name>Mg(2+)</name>
        <dbReference type="ChEBI" id="CHEBI:18420"/>
    </ligand>
</feature>
<feature type="binding site" evidence="1">
    <location>
        <position position="312"/>
    </location>
    <ligand>
        <name>Mg(2+)</name>
        <dbReference type="ChEBI" id="CHEBI:18420"/>
    </ligand>
</feature>
<feature type="binding site" evidence="1">
    <location>
        <position position="337"/>
    </location>
    <ligand>
        <name>(2R)-2-phosphoglycerate</name>
        <dbReference type="ChEBI" id="CHEBI:58289"/>
    </ligand>
</feature>
<feature type="binding site" evidence="1">
    <location>
        <position position="366"/>
    </location>
    <ligand>
        <name>(2R)-2-phosphoglycerate</name>
        <dbReference type="ChEBI" id="CHEBI:58289"/>
    </ligand>
</feature>
<feature type="binding site" evidence="1">
    <location>
        <position position="367"/>
    </location>
    <ligand>
        <name>(2R)-2-phosphoglycerate</name>
        <dbReference type="ChEBI" id="CHEBI:58289"/>
    </ligand>
</feature>
<feature type="binding site" evidence="1">
    <location>
        <position position="388"/>
    </location>
    <ligand>
        <name>(2R)-2-phosphoglycerate</name>
        <dbReference type="ChEBI" id="CHEBI:58289"/>
    </ligand>
</feature>
<reference key="1">
    <citation type="journal article" date="2010" name="Genome Biol. Evol.">
        <title>Continuing evolution of Burkholderia mallei through genome reduction and large-scale rearrangements.</title>
        <authorList>
            <person name="Losada L."/>
            <person name="Ronning C.M."/>
            <person name="DeShazer D."/>
            <person name="Woods D."/>
            <person name="Fedorova N."/>
            <person name="Kim H.S."/>
            <person name="Shabalina S.A."/>
            <person name="Pearson T.R."/>
            <person name="Brinkac L."/>
            <person name="Tan P."/>
            <person name="Nandi T."/>
            <person name="Crabtree J."/>
            <person name="Badger J."/>
            <person name="Beckstrom-Sternberg S."/>
            <person name="Saqib M."/>
            <person name="Schutzer S.E."/>
            <person name="Keim P."/>
            <person name="Nierman W.C."/>
        </authorList>
    </citation>
    <scope>NUCLEOTIDE SEQUENCE [LARGE SCALE GENOMIC DNA]</scope>
    <source>
        <strain>668</strain>
    </source>
</reference>
<name>ENO_BURP6</name>
<protein>
    <recommendedName>
        <fullName evidence="1">Enolase</fullName>
        <ecNumber evidence="1">4.2.1.11</ecNumber>
    </recommendedName>
    <alternativeName>
        <fullName evidence="1">2-phospho-D-glycerate hydro-lyase</fullName>
    </alternativeName>
    <alternativeName>
        <fullName evidence="1">2-phosphoglycerate dehydratase</fullName>
    </alternativeName>
</protein>
<evidence type="ECO:0000255" key="1">
    <source>
        <dbReference type="HAMAP-Rule" id="MF_00318"/>
    </source>
</evidence>
<dbReference type="EC" id="4.2.1.11" evidence="1"/>
<dbReference type="EMBL" id="CP000570">
    <property type="protein sequence ID" value="ABN83214.1"/>
    <property type="molecule type" value="Genomic_DNA"/>
</dbReference>
<dbReference type="RefSeq" id="WP_004192585.1">
    <property type="nucleotide sequence ID" value="NC_009074.1"/>
</dbReference>
<dbReference type="SMR" id="A3NB82"/>
<dbReference type="GeneID" id="93060827"/>
<dbReference type="KEGG" id="bpd:BURPS668_2577"/>
<dbReference type="HOGENOM" id="CLU_031223_2_1_4"/>
<dbReference type="UniPathway" id="UPA00109">
    <property type="reaction ID" value="UER00187"/>
</dbReference>
<dbReference type="GO" id="GO:0009986">
    <property type="term" value="C:cell surface"/>
    <property type="evidence" value="ECO:0007669"/>
    <property type="project" value="UniProtKB-SubCell"/>
</dbReference>
<dbReference type="GO" id="GO:0005576">
    <property type="term" value="C:extracellular region"/>
    <property type="evidence" value="ECO:0007669"/>
    <property type="project" value="UniProtKB-SubCell"/>
</dbReference>
<dbReference type="GO" id="GO:0000015">
    <property type="term" value="C:phosphopyruvate hydratase complex"/>
    <property type="evidence" value="ECO:0007669"/>
    <property type="project" value="InterPro"/>
</dbReference>
<dbReference type="GO" id="GO:0000287">
    <property type="term" value="F:magnesium ion binding"/>
    <property type="evidence" value="ECO:0007669"/>
    <property type="project" value="UniProtKB-UniRule"/>
</dbReference>
<dbReference type="GO" id="GO:0004634">
    <property type="term" value="F:phosphopyruvate hydratase activity"/>
    <property type="evidence" value="ECO:0007669"/>
    <property type="project" value="UniProtKB-UniRule"/>
</dbReference>
<dbReference type="GO" id="GO:0006096">
    <property type="term" value="P:glycolytic process"/>
    <property type="evidence" value="ECO:0007669"/>
    <property type="project" value="UniProtKB-UniRule"/>
</dbReference>
<dbReference type="CDD" id="cd03313">
    <property type="entry name" value="enolase"/>
    <property type="match status" value="1"/>
</dbReference>
<dbReference type="FunFam" id="3.20.20.120:FF:000001">
    <property type="entry name" value="Enolase"/>
    <property type="match status" value="1"/>
</dbReference>
<dbReference type="FunFam" id="3.30.390.10:FF:000001">
    <property type="entry name" value="Enolase"/>
    <property type="match status" value="1"/>
</dbReference>
<dbReference type="Gene3D" id="3.20.20.120">
    <property type="entry name" value="Enolase-like C-terminal domain"/>
    <property type="match status" value="1"/>
</dbReference>
<dbReference type="Gene3D" id="3.30.390.10">
    <property type="entry name" value="Enolase-like, N-terminal domain"/>
    <property type="match status" value="1"/>
</dbReference>
<dbReference type="HAMAP" id="MF_00318">
    <property type="entry name" value="Enolase"/>
    <property type="match status" value="1"/>
</dbReference>
<dbReference type="InterPro" id="IPR000941">
    <property type="entry name" value="Enolase"/>
</dbReference>
<dbReference type="InterPro" id="IPR036849">
    <property type="entry name" value="Enolase-like_C_sf"/>
</dbReference>
<dbReference type="InterPro" id="IPR029017">
    <property type="entry name" value="Enolase-like_N"/>
</dbReference>
<dbReference type="InterPro" id="IPR020810">
    <property type="entry name" value="Enolase_C"/>
</dbReference>
<dbReference type="InterPro" id="IPR020809">
    <property type="entry name" value="Enolase_CS"/>
</dbReference>
<dbReference type="InterPro" id="IPR020811">
    <property type="entry name" value="Enolase_N"/>
</dbReference>
<dbReference type="NCBIfam" id="TIGR01060">
    <property type="entry name" value="eno"/>
    <property type="match status" value="1"/>
</dbReference>
<dbReference type="PANTHER" id="PTHR11902">
    <property type="entry name" value="ENOLASE"/>
    <property type="match status" value="1"/>
</dbReference>
<dbReference type="PANTHER" id="PTHR11902:SF1">
    <property type="entry name" value="ENOLASE"/>
    <property type="match status" value="1"/>
</dbReference>
<dbReference type="Pfam" id="PF00113">
    <property type="entry name" value="Enolase_C"/>
    <property type="match status" value="1"/>
</dbReference>
<dbReference type="Pfam" id="PF03952">
    <property type="entry name" value="Enolase_N"/>
    <property type="match status" value="1"/>
</dbReference>
<dbReference type="PIRSF" id="PIRSF001400">
    <property type="entry name" value="Enolase"/>
    <property type="match status" value="1"/>
</dbReference>
<dbReference type="PRINTS" id="PR00148">
    <property type="entry name" value="ENOLASE"/>
</dbReference>
<dbReference type="SFLD" id="SFLDF00002">
    <property type="entry name" value="enolase"/>
    <property type="match status" value="1"/>
</dbReference>
<dbReference type="SFLD" id="SFLDG00178">
    <property type="entry name" value="enolase"/>
    <property type="match status" value="1"/>
</dbReference>
<dbReference type="SMART" id="SM01192">
    <property type="entry name" value="Enolase_C"/>
    <property type="match status" value="1"/>
</dbReference>
<dbReference type="SMART" id="SM01193">
    <property type="entry name" value="Enolase_N"/>
    <property type="match status" value="1"/>
</dbReference>
<dbReference type="SUPFAM" id="SSF51604">
    <property type="entry name" value="Enolase C-terminal domain-like"/>
    <property type="match status" value="1"/>
</dbReference>
<dbReference type="SUPFAM" id="SSF54826">
    <property type="entry name" value="Enolase N-terminal domain-like"/>
    <property type="match status" value="1"/>
</dbReference>
<dbReference type="PROSITE" id="PS00164">
    <property type="entry name" value="ENOLASE"/>
    <property type="match status" value="1"/>
</dbReference>